<sequence>MAEKVAVLLGGTSAEREVSLLSGQAVLAGLKEAGIDAYGVDTKDFPVTQLKEQGFDKVFIALHGRGGEDGTLQGVLEFLQLPYTGSGVMASALTMDKLRTKLVWQALGLPISPYVALNRQQFETLSPEELVACVAKLGLPLIVKPSHEGSSVGMSKVDHASELQKALVEAFQHDSDVLIEKWLSGPEFTVAILGDEVLPSIRIQPPGVFYDYDAKYLSDKTQYFCPSGLSDESEQQLAALALQAYHALDCSGWGRVDVMQDRDGHFYLLEVNTSPGMTSHSLVPMAARQYGLSFSQLVARILMLAD</sequence>
<dbReference type="EC" id="6.3.2.4" evidence="2"/>
<dbReference type="EMBL" id="CP000308">
    <property type="protein sequence ID" value="ABG15506.1"/>
    <property type="molecule type" value="Genomic_DNA"/>
</dbReference>
<dbReference type="RefSeq" id="WP_002210432.1">
    <property type="nucleotide sequence ID" value="NZ_CP009906.1"/>
</dbReference>
<dbReference type="SMR" id="Q1C216"/>
<dbReference type="KEGG" id="ypa:YPA_3544"/>
<dbReference type="UniPathway" id="UPA00219"/>
<dbReference type="Proteomes" id="UP000001971">
    <property type="component" value="Chromosome"/>
</dbReference>
<dbReference type="GO" id="GO:0005829">
    <property type="term" value="C:cytosol"/>
    <property type="evidence" value="ECO:0007669"/>
    <property type="project" value="TreeGrafter"/>
</dbReference>
<dbReference type="GO" id="GO:0005524">
    <property type="term" value="F:ATP binding"/>
    <property type="evidence" value="ECO:0007669"/>
    <property type="project" value="UniProtKB-KW"/>
</dbReference>
<dbReference type="GO" id="GO:0008716">
    <property type="term" value="F:D-alanine-D-alanine ligase activity"/>
    <property type="evidence" value="ECO:0007669"/>
    <property type="project" value="UniProtKB-UniRule"/>
</dbReference>
<dbReference type="GO" id="GO:0046872">
    <property type="term" value="F:metal ion binding"/>
    <property type="evidence" value="ECO:0007669"/>
    <property type="project" value="UniProtKB-KW"/>
</dbReference>
<dbReference type="GO" id="GO:0071555">
    <property type="term" value="P:cell wall organization"/>
    <property type="evidence" value="ECO:0007669"/>
    <property type="project" value="UniProtKB-KW"/>
</dbReference>
<dbReference type="GO" id="GO:0009252">
    <property type="term" value="P:peptidoglycan biosynthetic process"/>
    <property type="evidence" value="ECO:0007669"/>
    <property type="project" value="UniProtKB-UniRule"/>
</dbReference>
<dbReference type="GO" id="GO:0008360">
    <property type="term" value="P:regulation of cell shape"/>
    <property type="evidence" value="ECO:0007669"/>
    <property type="project" value="UniProtKB-KW"/>
</dbReference>
<dbReference type="FunFam" id="3.30.1490.20:FF:000007">
    <property type="entry name" value="D-alanine--D-alanine ligase"/>
    <property type="match status" value="1"/>
</dbReference>
<dbReference type="FunFam" id="3.30.470.20:FF:000008">
    <property type="entry name" value="D-alanine--D-alanine ligase"/>
    <property type="match status" value="1"/>
</dbReference>
<dbReference type="FunFam" id="3.40.50.20:FF:000013">
    <property type="entry name" value="D-alanine--D-alanine ligase"/>
    <property type="match status" value="1"/>
</dbReference>
<dbReference type="Gene3D" id="3.40.50.20">
    <property type="match status" value="1"/>
</dbReference>
<dbReference type="Gene3D" id="3.30.1490.20">
    <property type="entry name" value="ATP-grasp fold, A domain"/>
    <property type="match status" value="1"/>
</dbReference>
<dbReference type="Gene3D" id="3.30.470.20">
    <property type="entry name" value="ATP-grasp fold, B domain"/>
    <property type="match status" value="1"/>
</dbReference>
<dbReference type="HAMAP" id="MF_00047">
    <property type="entry name" value="Dala_Dala_lig"/>
    <property type="match status" value="1"/>
</dbReference>
<dbReference type="InterPro" id="IPR011761">
    <property type="entry name" value="ATP-grasp"/>
</dbReference>
<dbReference type="InterPro" id="IPR013815">
    <property type="entry name" value="ATP_grasp_subdomain_1"/>
</dbReference>
<dbReference type="InterPro" id="IPR000291">
    <property type="entry name" value="D-Ala_lig_Van_CS"/>
</dbReference>
<dbReference type="InterPro" id="IPR005905">
    <property type="entry name" value="D_ala_D_ala"/>
</dbReference>
<dbReference type="InterPro" id="IPR011095">
    <property type="entry name" value="Dala_Dala_lig_C"/>
</dbReference>
<dbReference type="InterPro" id="IPR011127">
    <property type="entry name" value="Dala_Dala_lig_N"/>
</dbReference>
<dbReference type="InterPro" id="IPR016185">
    <property type="entry name" value="PreATP-grasp_dom_sf"/>
</dbReference>
<dbReference type="NCBIfam" id="TIGR01205">
    <property type="entry name" value="D_ala_D_alaTIGR"/>
    <property type="match status" value="1"/>
</dbReference>
<dbReference type="NCBIfam" id="NF002378">
    <property type="entry name" value="PRK01372.1"/>
    <property type="match status" value="1"/>
</dbReference>
<dbReference type="PANTHER" id="PTHR23132">
    <property type="entry name" value="D-ALANINE--D-ALANINE LIGASE"/>
    <property type="match status" value="1"/>
</dbReference>
<dbReference type="PANTHER" id="PTHR23132:SF23">
    <property type="entry name" value="D-ALANINE--D-ALANINE LIGASE B"/>
    <property type="match status" value="1"/>
</dbReference>
<dbReference type="Pfam" id="PF07478">
    <property type="entry name" value="Dala_Dala_lig_C"/>
    <property type="match status" value="1"/>
</dbReference>
<dbReference type="Pfam" id="PF01820">
    <property type="entry name" value="Dala_Dala_lig_N"/>
    <property type="match status" value="1"/>
</dbReference>
<dbReference type="PIRSF" id="PIRSF039102">
    <property type="entry name" value="Ddl/VanB"/>
    <property type="match status" value="1"/>
</dbReference>
<dbReference type="SUPFAM" id="SSF56059">
    <property type="entry name" value="Glutathione synthetase ATP-binding domain-like"/>
    <property type="match status" value="1"/>
</dbReference>
<dbReference type="SUPFAM" id="SSF52440">
    <property type="entry name" value="PreATP-grasp domain"/>
    <property type="match status" value="1"/>
</dbReference>
<dbReference type="PROSITE" id="PS50975">
    <property type="entry name" value="ATP_GRASP"/>
    <property type="match status" value="1"/>
</dbReference>
<dbReference type="PROSITE" id="PS00843">
    <property type="entry name" value="DALA_DALA_LIGASE_1"/>
    <property type="match status" value="1"/>
</dbReference>
<dbReference type="PROSITE" id="PS00844">
    <property type="entry name" value="DALA_DALA_LIGASE_2"/>
    <property type="match status" value="1"/>
</dbReference>
<accession>Q1C216</accession>
<protein>
    <recommendedName>
        <fullName evidence="2">D-alanine--D-alanine ligase</fullName>
        <ecNumber evidence="2">6.3.2.4</ecNumber>
    </recommendedName>
    <alternativeName>
        <fullName evidence="2">D-Ala-D-Ala ligase</fullName>
    </alternativeName>
    <alternativeName>
        <fullName evidence="2">D-alanylalanine synthetase</fullName>
    </alternativeName>
</protein>
<evidence type="ECO:0000250" key="1"/>
<evidence type="ECO:0000255" key="2">
    <source>
        <dbReference type="HAMAP-Rule" id="MF_00047"/>
    </source>
</evidence>
<organism>
    <name type="scientific">Yersinia pestis bv. Antiqua (strain Antiqua)</name>
    <dbReference type="NCBI Taxonomy" id="360102"/>
    <lineage>
        <taxon>Bacteria</taxon>
        <taxon>Pseudomonadati</taxon>
        <taxon>Pseudomonadota</taxon>
        <taxon>Gammaproteobacteria</taxon>
        <taxon>Enterobacterales</taxon>
        <taxon>Yersiniaceae</taxon>
        <taxon>Yersinia</taxon>
    </lineage>
</organism>
<gene>
    <name evidence="2" type="primary">ddl</name>
    <name type="ordered locus">YPA_3544</name>
</gene>
<keyword id="KW-0067">ATP-binding</keyword>
<keyword id="KW-0133">Cell shape</keyword>
<keyword id="KW-0961">Cell wall biogenesis/degradation</keyword>
<keyword id="KW-0963">Cytoplasm</keyword>
<keyword id="KW-0436">Ligase</keyword>
<keyword id="KW-0460">Magnesium</keyword>
<keyword id="KW-0464">Manganese</keyword>
<keyword id="KW-0479">Metal-binding</keyword>
<keyword id="KW-0547">Nucleotide-binding</keyword>
<keyword id="KW-0573">Peptidoglycan synthesis</keyword>
<reference key="1">
    <citation type="journal article" date="2006" name="J. Bacteriol.">
        <title>Complete genome sequence of Yersinia pestis strains Antiqua and Nepal516: evidence of gene reduction in an emerging pathogen.</title>
        <authorList>
            <person name="Chain P.S.G."/>
            <person name="Hu P."/>
            <person name="Malfatti S.A."/>
            <person name="Radnedge L."/>
            <person name="Larimer F."/>
            <person name="Vergez L.M."/>
            <person name="Worsham P."/>
            <person name="Chu M.C."/>
            <person name="Andersen G.L."/>
        </authorList>
    </citation>
    <scope>NUCLEOTIDE SEQUENCE [LARGE SCALE GENOMIC DNA]</scope>
    <source>
        <strain>Antiqua</strain>
    </source>
</reference>
<feature type="chain" id="PRO_1000030520" description="D-alanine--D-alanine ligase">
    <location>
        <begin position="1"/>
        <end position="306"/>
    </location>
</feature>
<feature type="domain" description="ATP-grasp" evidence="2">
    <location>
        <begin position="101"/>
        <end position="303"/>
    </location>
</feature>
<feature type="binding site" evidence="2">
    <location>
        <begin position="134"/>
        <end position="189"/>
    </location>
    <ligand>
        <name>ATP</name>
        <dbReference type="ChEBI" id="CHEBI:30616"/>
    </ligand>
</feature>
<feature type="binding site" evidence="2">
    <location>
        <position position="257"/>
    </location>
    <ligand>
        <name>Mg(2+)</name>
        <dbReference type="ChEBI" id="CHEBI:18420"/>
        <label>1</label>
    </ligand>
</feature>
<feature type="binding site" evidence="2">
    <location>
        <position position="270"/>
    </location>
    <ligand>
        <name>Mg(2+)</name>
        <dbReference type="ChEBI" id="CHEBI:18420"/>
        <label>1</label>
    </ligand>
</feature>
<feature type="binding site" evidence="2">
    <location>
        <position position="270"/>
    </location>
    <ligand>
        <name>Mg(2+)</name>
        <dbReference type="ChEBI" id="CHEBI:18420"/>
        <label>2</label>
    </ligand>
</feature>
<feature type="binding site" evidence="2">
    <location>
        <position position="272"/>
    </location>
    <ligand>
        <name>Mg(2+)</name>
        <dbReference type="ChEBI" id="CHEBI:18420"/>
        <label>2</label>
    </ligand>
</feature>
<name>DDL_YERPA</name>
<comment type="function">
    <text evidence="2">Cell wall formation.</text>
</comment>
<comment type="catalytic activity">
    <reaction evidence="2">
        <text>2 D-alanine + ATP = D-alanyl-D-alanine + ADP + phosphate + H(+)</text>
        <dbReference type="Rhea" id="RHEA:11224"/>
        <dbReference type="ChEBI" id="CHEBI:15378"/>
        <dbReference type="ChEBI" id="CHEBI:30616"/>
        <dbReference type="ChEBI" id="CHEBI:43474"/>
        <dbReference type="ChEBI" id="CHEBI:57416"/>
        <dbReference type="ChEBI" id="CHEBI:57822"/>
        <dbReference type="ChEBI" id="CHEBI:456216"/>
        <dbReference type="EC" id="6.3.2.4"/>
    </reaction>
</comment>
<comment type="cofactor">
    <cofactor evidence="1">
        <name>Mg(2+)</name>
        <dbReference type="ChEBI" id="CHEBI:18420"/>
    </cofactor>
    <cofactor evidence="1">
        <name>Mn(2+)</name>
        <dbReference type="ChEBI" id="CHEBI:29035"/>
    </cofactor>
    <text evidence="1">Binds 2 magnesium or manganese ions per subunit.</text>
</comment>
<comment type="pathway">
    <text evidence="2">Cell wall biogenesis; peptidoglycan biosynthesis.</text>
</comment>
<comment type="subcellular location">
    <subcellularLocation>
        <location evidence="2">Cytoplasm</location>
    </subcellularLocation>
</comment>
<comment type="similarity">
    <text evidence="2">Belongs to the D-alanine--D-alanine ligase family.</text>
</comment>
<proteinExistence type="inferred from homology"/>